<gene>
    <name evidence="1" type="primary">selA</name>
    <name type="ordered locus">HI_0708</name>
</gene>
<name>SELA_HAEIN</name>
<keyword id="KW-0963">Cytoplasm</keyword>
<keyword id="KW-0648">Protein biosynthesis</keyword>
<keyword id="KW-0663">Pyridoxal phosphate</keyword>
<keyword id="KW-1185">Reference proteome</keyword>
<keyword id="KW-0711">Selenium</keyword>
<keyword id="KW-0808">Transferase</keyword>
<sequence>MTALFQQLPSVDKILKTPQGLQLITEFGHTAVVATCRELLTQARQFIKKNNQLPEYFSNFDRTFLEIHSHLQKQNQVQIKAVHNLTGTVLHTNLGRALWSEAAQQAALSAMQKNVSLEYDLDEGKRSHRDNYISELLCKLTGAEAACIVNNNAAAVLLMLATFAQGKEVIISRGELIEIGGAFRIPDIMEQAGCHLVEVGTTNRTHLKDYRNAITENTAFLMKVHSSNYQICGFTSSVSEEELTELGQEMNVPVVTDLGSGALVDLSQYGLPKEPTVQEKIAQGVDLVSFSGDKLLGGVQAGIIVGKKEWIEQLQAHPLKRVLRCDKVILAGLEATLRLYLNPEKLTEKLPTLRLLTQPLKQLKINAMRLKERLESRLNSQFELQIEASQAQIGSGSQPMERIPSVAVTIAEKTNAKLSALSARFKQLSQPIIGRMENGKIWLDLRSLADIETLLNTLDEL</sequence>
<accession>P43910</accession>
<proteinExistence type="inferred from homology"/>
<feature type="chain" id="PRO_0000189605" description="L-seryl-tRNA(Sec) selenium transferase">
    <location>
        <begin position="1"/>
        <end position="461"/>
    </location>
</feature>
<feature type="modified residue" description="N6-(pyridoxal phosphate)lysine" evidence="1">
    <location>
        <position position="294"/>
    </location>
</feature>
<reference key="1">
    <citation type="journal article" date="1995" name="Science">
        <title>Whole-genome random sequencing and assembly of Haemophilus influenzae Rd.</title>
        <authorList>
            <person name="Fleischmann R.D."/>
            <person name="Adams M.D."/>
            <person name="White O."/>
            <person name="Clayton R.A."/>
            <person name="Kirkness E.F."/>
            <person name="Kerlavage A.R."/>
            <person name="Bult C.J."/>
            <person name="Tomb J.-F."/>
            <person name="Dougherty B.A."/>
            <person name="Merrick J.M."/>
            <person name="McKenney K."/>
            <person name="Sutton G.G."/>
            <person name="FitzHugh W."/>
            <person name="Fields C.A."/>
            <person name="Gocayne J.D."/>
            <person name="Scott J.D."/>
            <person name="Shirley R."/>
            <person name="Liu L.-I."/>
            <person name="Glodek A."/>
            <person name="Kelley J.M."/>
            <person name="Weidman J.F."/>
            <person name="Phillips C.A."/>
            <person name="Spriggs T."/>
            <person name="Hedblom E."/>
            <person name="Cotton M.D."/>
            <person name="Utterback T.R."/>
            <person name="Hanna M.C."/>
            <person name="Nguyen D.T."/>
            <person name="Saudek D.M."/>
            <person name="Brandon R.C."/>
            <person name="Fine L.D."/>
            <person name="Fritchman J.L."/>
            <person name="Fuhrmann J.L."/>
            <person name="Geoghagen N.S.M."/>
            <person name="Gnehm C.L."/>
            <person name="McDonald L.A."/>
            <person name="Small K.V."/>
            <person name="Fraser C.M."/>
            <person name="Smith H.O."/>
            <person name="Venter J.C."/>
        </authorList>
    </citation>
    <scope>NUCLEOTIDE SEQUENCE [LARGE SCALE GENOMIC DNA]</scope>
    <source>
        <strain>ATCC 51907 / DSM 11121 / KW20 / Rd</strain>
    </source>
</reference>
<evidence type="ECO:0000255" key="1">
    <source>
        <dbReference type="HAMAP-Rule" id="MF_00423"/>
    </source>
</evidence>
<organism>
    <name type="scientific">Haemophilus influenzae (strain ATCC 51907 / DSM 11121 / KW20 / Rd)</name>
    <dbReference type="NCBI Taxonomy" id="71421"/>
    <lineage>
        <taxon>Bacteria</taxon>
        <taxon>Pseudomonadati</taxon>
        <taxon>Pseudomonadota</taxon>
        <taxon>Gammaproteobacteria</taxon>
        <taxon>Pasteurellales</taxon>
        <taxon>Pasteurellaceae</taxon>
        <taxon>Haemophilus</taxon>
    </lineage>
</organism>
<comment type="function">
    <text evidence="1">Converts seryl-tRNA(Sec) to selenocysteinyl-tRNA(Sec) required for selenoprotein biosynthesis.</text>
</comment>
<comment type="catalytic activity">
    <reaction evidence="1">
        <text>L-seryl-tRNA(Sec) + selenophosphate + H(+) = L-selenocysteinyl-tRNA(Sec) + phosphate</text>
        <dbReference type="Rhea" id="RHEA:22728"/>
        <dbReference type="Rhea" id="RHEA-COMP:9742"/>
        <dbReference type="Rhea" id="RHEA-COMP:9743"/>
        <dbReference type="ChEBI" id="CHEBI:15378"/>
        <dbReference type="ChEBI" id="CHEBI:16144"/>
        <dbReference type="ChEBI" id="CHEBI:43474"/>
        <dbReference type="ChEBI" id="CHEBI:78533"/>
        <dbReference type="ChEBI" id="CHEBI:78573"/>
        <dbReference type="EC" id="2.9.1.1"/>
    </reaction>
</comment>
<comment type="cofactor">
    <cofactor evidence="1">
        <name>pyridoxal 5'-phosphate</name>
        <dbReference type="ChEBI" id="CHEBI:597326"/>
    </cofactor>
</comment>
<comment type="pathway">
    <text evidence="1">Aminoacyl-tRNA biosynthesis; selenocysteinyl-tRNA(Sec) biosynthesis; selenocysteinyl-tRNA(Sec) from L-seryl-tRNA(Sec) (bacterial route): step 1/1.</text>
</comment>
<comment type="subcellular location">
    <subcellularLocation>
        <location evidence="1">Cytoplasm</location>
    </subcellularLocation>
</comment>
<comment type="similarity">
    <text evidence="1">Belongs to the SelA family.</text>
</comment>
<protein>
    <recommendedName>
        <fullName evidence="1">L-seryl-tRNA(Sec) selenium transferase</fullName>
        <ecNumber evidence="1">2.9.1.1</ecNumber>
    </recommendedName>
    <alternativeName>
        <fullName evidence="1">Selenocysteine synthase</fullName>
        <shortName evidence="1">Sec synthase</shortName>
    </alternativeName>
    <alternativeName>
        <fullName evidence="1">Selenocysteinyl-tRNA(Sec) synthase</fullName>
    </alternativeName>
</protein>
<dbReference type="EC" id="2.9.1.1" evidence="1"/>
<dbReference type="EMBL" id="L42023">
    <property type="protein sequence ID" value="AAC22365.1"/>
    <property type="molecule type" value="Genomic_DNA"/>
</dbReference>
<dbReference type="PIR" id="H64087">
    <property type="entry name" value="H64087"/>
</dbReference>
<dbReference type="RefSeq" id="NP_438866.1">
    <property type="nucleotide sequence ID" value="NC_000907.1"/>
</dbReference>
<dbReference type="SMR" id="P43910"/>
<dbReference type="STRING" id="71421.HI_0708"/>
<dbReference type="DNASU" id="950262"/>
<dbReference type="EnsemblBacteria" id="AAC22365">
    <property type="protein sequence ID" value="AAC22365"/>
    <property type="gene ID" value="HI_0708"/>
</dbReference>
<dbReference type="KEGG" id="hin:HI_0708"/>
<dbReference type="PATRIC" id="fig|71421.8.peg.738"/>
<dbReference type="eggNOG" id="COG1921">
    <property type="taxonomic scope" value="Bacteria"/>
</dbReference>
<dbReference type="HOGENOM" id="CLU_038142_1_0_6"/>
<dbReference type="OrthoDB" id="9787096at2"/>
<dbReference type="PhylomeDB" id="P43910"/>
<dbReference type="BioCyc" id="HINF71421:G1GJ1-742-MONOMER"/>
<dbReference type="UniPathway" id="UPA00906">
    <property type="reaction ID" value="UER00896"/>
</dbReference>
<dbReference type="Proteomes" id="UP000000579">
    <property type="component" value="Chromosome"/>
</dbReference>
<dbReference type="GO" id="GO:0005737">
    <property type="term" value="C:cytoplasm"/>
    <property type="evidence" value="ECO:0007669"/>
    <property type="project" value="UniProtKB-SubCell"/>
</dbReference>
<dbReference type="GO" id="GO:0004125">
    <property type="term" value="F:L-seryl-tRNA(Sec) selenium transferase activity"/>
    <property type="evidence" value="ECO:0000318"/>
    <property type="project" value="GO_Central"/>
</dbReference>
<dbReference type="GO" id="GO:0001717">
    <property type="term" value="P:conversion of seryl-tRNAsec to selenocys-tRNAsec"/>
    <property type="evidence" value="ECO:0007669"/>
    <property type="project" value="UniProtKB-UniRule"/>
</dbReference>
<dbReference type="GO" id="GO:0001514">
    <property type="term" value="P:selenocysteine incorporation"/>
    <property type="evidence" value="ECO:0007669"/>
    <property type="project" value="UniProtKB-UniRule"/>
</dbReference>
<dbReference type="FunFam" id="3.40.640.10:FF:000028">
    <property type="entry name" value="L-seryl-tRNA(Sec) selenium transferase"/>
    <property type="match status" value="1"/>
</dbReference>
<dbReference type="Gene3D" id="3.90.1150.180">
    <property type="match status" value="1"/>
</dbReference>
<dbReference type="Gene3D" id="3.40.640.10">
    <property type="entry name" value="Type I PLP-dependent aspartate aminotransferase-like (Major domain)"/>
    <property type="match status" value="1"/>
</dbReference>
<dbReference type="HAMAP" id="MF_00423">
    <property type="entry name" value="SelA"/>
    <property type="match status" value="1"/>
</dbReference>
<dbReference type="InterPro" id="IPR015424">
    <property type="entry name" value="PyrdxlP-dep_Trfase"/>
</dbReference>
<dbReference type="InterPro" id="IPR015421">
    <property type="entry name" value="PyrdxlP-dep_Trfase_major"/>
</dbReference>
<dbReference type="InterPro" id="IPR018319">
    <property type="entry name" value="SelA-like"/>
</dbReference>
<dbReference type="InterPro" id="IPR004534">
    <property type="entry name" value="SelA_trans"/>
</dbReference>
<dbReference type="InterPro" id="IPR025862">
    <property type="entry name" value="SelA_trans_N_dom"/>
</dbReference>
<dbReference type="NCBIfam" id="TIGR00474">
    <property type="entry name" value="selA"/>
    <property type="match status" value="1"/>
</dbReference>
<dbReference type="PANTHER" id="PTHR32328">
    <property type="entry name" value="L-SERYL-TRNA(SEC) SELENIUM TRANSFERASE"/>
    <property type="match status" value="1"/>
</dbReference>
<dbReference type="PANTHER" id="PTHR32328:SF0">
    <property type="entry name" value="L-SERYL-TRNA(SEC) SELENIUM TRANSFERASE"/>
    <property type="match status" value="1"/>
</dbReference>
<dbReference type="Pfam" id="PF12390">
    <property type="entry name" value="Se-cys_synth_N"/>
    <property type="match status" value="1"/>
</dbReference>
<dbReference type="Pfam" id="PF03841">
    <property type="entry name" value="SelA"/>
    <property type="match status" value="1"/>
</dbReference>
<dbReference type="SUPFAM" id="SSF53383">
    <property type="entry name" value="PLP-dependent transferases"/>
    <property type="match status" value="1"/>
</dbReference>